<organism>
    <name type="scientific">Escherichia coli (strain K12)</name>
    <dbReference type="NCBI Taxonomy" id="83333"/>
    <lineage>
        <taxon>Bacteria</taxon>
        <taxon>Pseudomonadati</taxon>
        <taxon>Pseudomonadota</taxon>
        <taxon>Gammaproteobacteria</taxon>
        <taxon>Enterobacterales</taxon>
        <taxon>Enterobacteriaceae</taxon>
        <taxon>Escherichia</taxon>
    </lineage>
</organism>
<reference key="1">
    <citation type="journal article" date="1987" name="Mol. Gen. Genet.">
        <title>Three fim genes required for the regulation of length and mediation of adhesion of Escherichia coli type 1 fimbriae.</title>
        <authorList>
            <person name="Klemm P."/>
            <person name="Christiansen G."/>
        </authorList>
    </citation>
    <scope>NUCLEOTIDE SEQUENCE [GENOMIC DNA]</scope>
</reference>
<reference key="2">
    <citation type="journal article" date="1995" name="Nucleic Acids Res.">
        <title>Analysis of the Escherichia coli genome VI: DNA sequence of the region from 92.8 through 100 minutes.</title>
        <authorList>
            <person name="Burland V.D."/>
            <person name="Plunkett G. III"/>
            <person name="Sofia H.J."/>
            <person name="Daniels D.L."/>
            <person name="Blattner F.R."/>
        </authorList>
    </citation>
    <scope>NUCLEOTIDE SEQUENCE [LARGE SCALE GENOMIC DNA]</scope>
    <source>
        <strain>K12 / MG1655 / ATCC 47076</strain>
    </source>
</reference>
<reference key="3">
    <citation type="journal article" date="1997" name="Science">
        <title>The complete genome sequence of Escherichia coli K-12.</title>
        <authorList>
            <person name="Blattner F.R."/>
            <person name="Plunkett G. III"/>
            <person name="Bloch C.A."/>
            <person name="Perna N.T."/>
            <person name="Burland V."/>
            <person name="Riley M."/>
            <person name="Collado-Vides J."/>
            <person name="Glasner J.D."/>
            <person name="Rode C.K."/>
            <person name="Mayhew G.F."/>
            <person name="Gregor J."/>
            <person name="Davis N.W."/>
            <person name="Kirkpatrick H.A."/>
            <person name="Goeden M.A."/>
            <person name="Rose D.J."/>
            <person name="Mau B."/>
            <person name="Shao Y."/>
        </authorList>
    </citation>
    <scope>NUCLEOTIDE SEQUENCE [LARGE SCALE GENOMIC DNA]</scope>
    <source>
        <strain>K12 / MG1655 / ATCC 47076</strain>
    </source>
</reference>
<reference key="4">
    <citation type="journal article" date="2006" name="Mol. Syst. Biol.">
        <title>Highly accurate genome sequences of Escherichia coli K-12 strains MG1655 and W3110.</title>
        <authorList>
            <person name="Hayashi K."/>
            <person name="Morooka N."/>
            <person name="Yamamoto Y."/>
            <person name="Fujita K."/>
            <person name="Isono K."/>
            <person name="Choi S."/>
            <person name="Ohtsubo E."/>
            <person name="Baba T."/>
            <person name="Wanner B.L."/>
            <person name="Mori H."/>
            <person name="Horiuchi T."/>
        </authorList>
    </citation>
    <scope>NUCLEOTIDE SEQUENCE [LARGE SCALE GENOMIC DNA]</scope>
    <source>
        <strain>K12 / W3110 / ATCC 27325 / DSM 5911</strain>
    </source>
</reference>
<sequence length="167" mass="17317">MKWCKRGYVLAAILALASATIQAADVTITVNGKVVAKPCTVSTTNATVDLGDLYSFSLMSAGAASAWHDVALELTNCPVGTSRVTASFSGAADSTGYYKNQGTAQNIQLELQDDSGNTLNTGATKTVQVDDSSQSAHFPLQVRALTVNGGATQGTIQAVISITYTYS</sequence>
<proteinExistence type="evidence at protein level"/>
<feature type="signal peptide" evidence="2">
    <location>
        <begin position="1"/>
        <end position="23"/>
    </location>
</feature>
<feature type="chain" id="PRO_0000009210" description="Protein FimG">
    <location>
        <begin position="24"/>
        <end position="167"/>
    </location>
</feature>
<feature type="site" description="Required for stability and transport" evidence="1">
    <location>
        <position position="166"/>
    </location>
</feature>
<feature type="disulfide bond" evidence="3">
    <location>
        <begin position="39"/>
        <end position="77"/>
    </location>
</feature>
<feature type="sequence conflict" description="In Ref. 1; CAA29155." evidence="3" ref="1">
    <original>A</original>
    <variation>S</variation>
    <location>
        <position position="61"/>
    </location>
</feature>
<feature type="sequence conflict" description="In Ref. 1; CAA29155." evidence="3" ref="1">
    <original>NG</original>
    <variation>KV</variation>
    <location>
        <begin position="148"/>
        <end position="149"/>
    </location>
</feature>
<feature type="strand" evidence="4">
    <location>
        <begin position="26"/>
        <end position="34"/>
    </location>
</feature>
<feature type="strand" evidence="6">
    <location>
        <begin position="40"/>
        <end position="42"/>
    </location>
</feature>
<feature type="strand" evidence="5">
    <location>
        <begin position="44"/>
        <end position="53"/>
    </location>
</feature>
<feature type="helix" evidence="5">
    <location>
        <begin position="55"/>
        <end position="57"/>
    </location>
</feature>
<feature type="strand" evidence="5">
    <location>
        <begin position="68"/>
        <end position="75"/>
    </location>
</feature>
<feature type="strand" evidence="5">
    <location>
        <begin position="83"/>
        <end position="89"/>
    </location>
</feature>
<feature type="strand" evidence="5">
    <location>
        <begin position="96"/>
        <end position="99"/>
    </location>
</feature>
<feature type="strand" evidence="5">
    <location>
        <begin position="108"/>
        <end position="112"/>
    </location>
</feature>
<feature type="strand" evidence="6">
    <location>
        <begin position="114"/>
        <end position="116"/>
    </location>
</feature>
<feature type="strand" evidence="5">
    <location>
        <begin position="124"/>
        <end position="128"/>
    </location>
</feature>
<feature type="turn" evidence="5">
    <location>
        <begin position="131"/>
        <end position="134"/>
    </location>
</feature>
<feature type="strand" evidence="5">
    <location>
        <begin position="135"/>
        <end position="145"/>
    </location>
</feature>
<feature type="strand" evidence="5">
    <location>
        <begin position="147"/>
        <end position="149"/>
    </location>
</feature>
<feature type="strand" evidence="5">
    <location>
        <begin position="153"/>
        <end position="166"/>
    </location>
</feature>
<keyword id="KW-0002">3D-structure</keyword>
<keyword id="KW-1015">Disulfide bond</keyword>
<keyword id="KW-0281">Fimbrium</keyword>
<keyword id="KW-1185">Reference proteome</keyword>
<keyword id="KW-0732">Signal</keyword>
<dbReference type="EMBL" id="X05672">
    <property type="protein sequence ID" value="CAA29155.1"/>
    <property type="molecule type" value="Genomic_DNA"/>
</dbReference>
<dbReference type="EMBL" id="U14003">
    <property type="protein sequence ID" value="AAA97215.1"/>
    <property type="molecule type" value="Genomic_DNA"/>
</dbReference>
<dbReference type="EMBL" id="U00096">
    <property type="protein sequence ID" value="AAC77275.1"/>
    <property type="molecule type" value="Genomic_DNA"/>
</dbReference>
<dbReference type="EMBL" id="AP009048">
    <property type="protein sequence ID" value="BAE78312.1"/>
    <property type="molecule type" value="Genomic_DNA"/>
</dbReference>
<dbReference type="PIR" id="S56544">
    <property type="entry name" value="S56544"/>
</dbReference>
<dbReference type="RefSeq" id="NP_418739.1">
    <property type="nucleotide sequence ID" value="NC_000913.3"/>
</dbReference>
<dbReference type="PDB" id="3BFQ">
    <property type="method" value="X-ray"/>
    <property type="resolution" value="1.34 A"/>
    <property type="chains" value="G=36-167"/>
</dbReference>
<dbReference type="PDB" id="3BFW">
    <property type="method" value="X-ray"/>
    <property type="resolution" value="1.80 A"/>
    <property type="chains" value="A/C=36-167"/>
</dbReference>
<dbReference type="PDB" id="3JWN">
    <property type="method" value="X-ray"/>
    <property type="resolution" value="2.69 A"/>
    <property type="chains" value="G/M=24-167"/>
</dbReference>
<dbReference type="PDB" id="4J3O">
    <property type="method" value="X-ray"/>
    <property type="resolution" value="3.80 A"/>
    <property type="chains" value="G=24-167"/>
</dbReference>
<dbReference type="PDB" id="4XO9">
    <property type="method" value="X-ray"/>
    <property type="resolution" value="1.14 A"/>
    <property type="chains" value="B=24-37"/>
</dbReference>
<dbReference type="PDB" id="4XOA">
    <property type="method" value="X-ray"/>
    <property type="resolution" value="2.54 A"/>
    <property type="chains" value="B/D/F/H=24-37"/>
</dbReference>
<dbReference type="PDB" id="4XOD">
    <property type="method" value="X-ray"/>
    <property type="resolution" value="1.14 A"/>
    <property type="chains" value="B=24-37"/>
</dbReference>
<dbReference type="PDB" id="5IQM">
    <property type="method" value="X-ray"/>
    <property type="resolution" value="1.50 A"/>
    <property type="chains" value="A/G=36-167"/>
</dbReference>
<dbReference type="PDB" id="5IQN">
    <property type="method" value="X-ray"/>
    <property type="resolution" value="1.00 A"/>
    <property type="chains" value="A/G=36-167"/>
</dbReference>
<dbReference type="PDB" id="5IQO">
    <property type="method" value="X-ray"/>
    <property type="resolution" value="1.30 A"/>
    <property type="chains" value="A/C=36-167"/>
</dbReference>
<dbReference type="PDB" id="6E14">
    <property type="method" value="EM"/>
    <property type="resolution" value="4.00 A"/>
    <property type="chains" value="G=10-167"/>
</dbReference>
<dbReference type="PDB" id="6E15">
    <property type="method" value="EM"/>
    <property type="resolution" value="6.20 A"/>
    <property type="chains" value="G=10-167"/>
</dbReference>
<dbReference type="PDB" id="7SZO">
    <property type="method" value="X-ray"/>
    <property type="resolution" value="2.80 A"/>
    <property type="chains" value="G/M=24-167"/>
</dbReference>
<dbReference type="PDBsum" id="3BFQ"/>
<dbReference type="PDBsum" id="3BFW"/>
<dbReference type="PDBsum" id="3JWN"/>
<dbReference type="PDBsum" id="4J3O"/>
<dbReference type="PDBsum" id="4XO9"/>
<dbReference type="PDBsum" id="4XOA"/>
<dbReference type="PDBsum" id="4XOD"/>
<dbReference type="PDBsum" id="5IQM"/>
<dbReference type="PDBsum" id="5IQN"/>
<dbReference type="PDBsum" id="5IQO"/>
<dbReference type="PDBsum" id="6E14"/>
<dbReference type="PDBsum" id="6E15"/>
<dbReference type="PDBsum" id="7SZO"/>
<dbReference type="EMDB" id="EMD-43048"/>
<dbReference type="EMDB" id="EMD-46596"/>
<dbReference type="EMDB" id="EMD-8953"/>
<dbReference type="EMDB" id="EMD-8954"/>
<dbReference type="SMR" id="P08190"/>
<dbReference type="BioGRID" id="4262750">
    <property type="interactions" value="9"/>
</dbReference>
<dbReference type="ComplexPortal" id="CPX-2855">
    <property type="entry name" value="Fimbrial Tip Complex FimFGH"/>
</dbReference>
<dbReference type="DIP" id="DIP-9615N"/>
<dbReference type="FunCoup" id="P08190">
    <property type="interactions" value="9"/>
</dbReference>
<dbReference type="IntAct" id="P08190">
    <property type="interactions" value="1"/>
</dbReference>
<dbReference type="STRING" id="511145.b4319"/>
<dbReference type="PaxDb" id="511145-b4319"/>
<dbReference type="EnsemblBacteria" id="AAC77275">
    <property type="protein sequence ID" value="AAC77275"/>
    <property type="gene ID" value="b4319"/>
</dbReference>
<dbReference type="GeneID" id="948846"/>
<dbReference type="KEGG" id="ecj:JW4282"/>
<dbReference type="KEGG" id="eco:b4319"/>
<dbReference type="KEGG" id="ecoc:C3026_23330"/>
<dbReference type="PATRIC" id="fig|1411691.4.peg.2373"/>
<dbReference type="EchoBASE" id="EB0310"/>
<dbReference type="eggNOG" id="COG3539">
    <property type="taxonomic scope" value="Bacteria"/>
</dbReference>
<dbReference type="HOGENOM" id="CLU_088965_6_1_6"/>
<dbReference type="InParanoid" id="P08190"/>
<dbReference type="OMA" id="INITYTW"/>
<dbReference type="OrthoDB" id="6465350at2"/>
<dbReference type="PhylomeDB" id="P08190"/>
<dbReference type="BioCyc" id="EcoCyc:EG10314-MONOMER"/>
<dbReference type="EvolutionaryTrace" id="P08190"/>
<dbReference type="PRO" id="PR:P08190"/>
<dbReference type="Proteomes" id="UP000000625">
    <property type="component" value="Chromosome"/>
</dbReference>
<dbReference type="GO" id="GO:0009289">
    <property type="term" value="C:pilus"/>
    <property type="evidence" value="ECO:0000318"/>
    <property type="project" value="GO_Central"/>
</dbReference>
<dbReference type="GO" id="GO:0009419">
    <property type="term" value="C:pilus tip"/>
    <property type="evidence" value="ECO:0000353"/>
    <property type="project" value="ComplexPortal"/>
</dbReference>
<dbReference type="GO" id="GO:0007155">
    <property type="term" value="P:cell adhesion"/>
    <property type="evidence" value="ECO:0000315"/>
    <property type="project" value="ComplexPortal"/>
</dbReference>
<dbReference type="GO" id="GO:0043709">
    <property type="term" value="P:cell adhesion involved in single-species biofilm formation"/>
    <property type="evidence" value="ECO:0000318"/>
    <property type="project" value="GO_Central"/>
</dbReference>
<dbReference type="GO" id="GO:0031589">
    <property type="term" value="P:cell-substrate adhesion"/>
    <property type="evidence" value="ECO:0000315"/>
    <property type="project" value="ComplexPortal"/>
</dbReference>
<dbReference type="GO" id="GO:0007638">
    <property type="term" value="P:mechanosensory behavior"/>
    <property type="evidence" value="ECO:0000314"/>
    <property type="project" value="ComplexPortal"/>
</dbReference>
<dbReference type="Gene3D" id="2.60.40.1090">
    <property type="entry name" value="Fimbrial-type adhesion domain"/>
    <property type="match status" value="1"/>
</dbReference>
<dbReference type="InterPro" id="IPR036937">
    <property type="entry name" value="Adhesion_dom_fimbrial_sf"/>
</dbReference>
<dbReference type="InterPro" id="IPR008966">
    <property type="entry name" value="Adhesion_dom_sf"/>
</dbReference>
<dbReference type="InterPro" id="IPR050263">
    <property type="entry name" value="Bact_Fimbrial_Adh_Pro"/>
</dbReference>
<dbReference type="PANTHER" id="PTHR33420">
    <property type="entry name" value="FIMBRIAL SUBUNIT ELFA-RELATED"/>
    <property type="match status" value="1"/>
</dbReference>
<dbReference type="PANTHER" id="PTHR33420:SF27">
    <property type="entry name" value="PROTEIN FIMG"/>
    <property type="match status" value="1"/>
</dbReference>
<dbReference type="SUPFAM" id="SSF49401">
    <property type="entry name" value="Bacterial adhesins"/>
    <property type="match status" value="1"/>
</dbReference>
<comment type="function">
    <text>Involved in regulation of length and mediation of adhesion of type 1 fimbriae (but not necessary for the production of fimbriae). Involved in the integration of FimH in the fimbriae.</text>
</comment>
<comment type="interaction">
    <interactant intactId="EBI-1785843">
        <id>P08190</id>
    </interactant>
    <interactant intactId="EBI-1028005">
        <id>P31697</id>
        <label>fimC</label>
    </interactant>
    <organismsDiffer>false</organismsDiffer>
    <experiments>5</experiments>
</comment>
<comment type="subcellular location">
    <subcellularLocation>
        <location>Fimbrium</location>
    </subcellularLocation>
</comment>
<comment type="similarity">
    <text evidence="3">Belongs to the fimbrial protein family.</text>
</comment>
<evidence type="ECO:0000250" key="1"/>
<evidence type="ECO:0000255" key="2"/>
<evidence type="ECO:0000305" key="3"/>
<evidence type="ECO:0007829" key="4">
    <source>
        <dbReference type="PDB" id="4XO9"/>
    </source>
</evidence>
<evidence type="ECO:0007829" key="5">
    <source>
        <dbReference type="PDB" id="5IQN"/>
    </source>
</evidence>
<evidence type="ECO:0007829" key="6">
    <source>
        <dbReference type="PDB" id="5IQO"/>
    </source>
</evidence>
<accession>P08190</accession>
<accession>Q2M5Z4</accession>
<gene>
    <name type="primary">fimG</name>
    <name type="ordered locus">b4319</name>
    <name type="ordered locus">JW4282</name>
</gene>
<name>FIMG_ECOLI</name>
<protein>
    <recommendedName>
        <fullName>Protein FimG</fullName>
    </recommendedName>
</protein>